<reference key="1">
    <citation type="journal article" date="2006" name="J. Bacteriol.">
        <title>Genome sequence of Aeromonas hydrophila ATCC 7966T: jack of all trades.</title>
        <authorList>
            <person name="Seshadri R."/>
            <person name="Joseph S.W."/>
            <person name="Chopra A.K."/>
            <person name="Sha J."/>
            <person name="Shaw J."/>
            <person name="Graf J."/>
            <person name="Haft D.H."/>
            <person name="Wu M."/>
            <person name="Ren Q."/>
            <person name="Rosovitz M.J."/>
            <person name="Madupu R."/>
            <person name="Tallon L."/>
            <person name="Kim M."/>
            <person name="Jin S."/>
            <person name="Vuong H."/>
            <person name="Stine O.C."/>
            <person name="Ali A."/>
            <person name="Horneman A.J."/>
            <person name="Heidelberg J.F."/>
        </authorList>
    </citation>
    <scope>NUCLEOTIDE SEQUENCE [LARGE SCALE GENOMIC DNA]</scope>
    <source>
        <strain>ATCC 7966 / DSM 30187 / BCRC 13018 / CCUG 14551 / JCM 1027 / KCTC 2358 / NCIMB 9240 / NCTC 8049</strain>
    </source>
</reference>
<gene>
    <name evidence="1" type="primary">ruvB</name>
    <name type="ordered locus">AHA_3647</name>
</gene>
<feature type="chain" id="PRO_1000001359" description="Holliday junction branch migration complex subunit RuvB">
    <location>
        <begin position="1"/>
        <end position="336"/>
    </location>
</feature>
<feature type="region of interest" description="Large ATPase domain (RuvB-L)" evidence="1">
    <location>
        <begin position="4"/>
        <end position="184"/>
    </location>
</feature>
<feature type="region of interest" description="Small ATPAse domain (RuvB-S)" evidence="1">
    <location>
        <begin position="185"/>
        <end position="255"/>
    </location>
</feature>
<feature type="region of interest" description="Head domain (RuvB-H)" evidence="1">
    <location>
        <begin position="258"/>
        <end position="336"/>
    </location>
</feature>
<feature type="binding site" evidence="1">
    <location>
        <position position="23"/>
    </location>
    <ligand>
        <name>ATP</name>
        <dbReference type="ChEBI" id="CHEBI:30616"/>
    </ligand>
</feature>
<feature type="binding site" evidence="1">
    <location>
        <position position="24"/>
    </location>
    <ligand>
        <name>ATP</name>
        <dbReference type="ChEBI" id="CHEBI:30616"/>
    </ligand>
</feature>
<feature type="binding site" evidence="1">
    <location>
        <position position="65"/>
    </location>
    <ligand>
        <name>ATP</name>
        <dbReference type="ChEBI" id="CHEBI:30616"/>
    </ligand>
</feature>
<feature type="binding site" evidence="1">
    <location>
        <position position="68"/>
    </location>
    <ligand>
        <name>ATP</name>
        <dbReference type="ChEBI" id="CHEBI:30616"/>
    </ligand>
</feature>
<feature type="binding site" evidence="1">
    <location>
        <position position="69"/>
    </location>
    <ligand>
        <name>ATP</name>
        <dbReference type="ChEBI" id="CHEBI:30616"/>
    </ligand>
</feature>
<feature type="binding site" evidence="1">
    <location>
        <position position="69"/>
    </location>
    <ligand>
        <name>Mg(2+)</name>
        <dbReference type="ChEBI" id="CHEBI:18420"/>
    </ligand>
</feature>
<feature type="binding site" evidence="1">
    <location>
        <position position="70"/>
    </location>
    <ligand>
        <name>ATP</name>
        <dbReference type="ChEBI" id="CHEBI:30616"/>
    </ligand>
</feature>
<feature type="binding site" evidence="1">
    <location>
        <begin position="131"/>
        <end position="133"/>
    </location>
    <ligand>
        <name>ATP</name>
        <dbReference type="ChEBI" id="CHEBI:30616"/>
    </ligand>
</feature>
<feature type="binding site" evidence="1">
    <location>
        <position position="174"/>
    </location>
    <ligand>
        <name>ATP</name>
        <dbReference type="ChEBI" id="CHEBI:30616"/>
    </ligand>
</feature>
<feature type="binding site" evidence="1">
    <location>
        <position position="184"/>
    </location>
    <ligand>
        <name>ATP</name>
        <dbReference type="ChEBI" id="CHEBI:30616"/>
    </ligand>
</feature>
<feature type="binding site" evidence="1">
    <location>
        <position position="221"/>
    </location>
    <ligand>
        <name>ATP</name>
        <dbReference type="ChEBI" id="CHEBI:30616"/>
    </ligand>
</feature>
<feature type="binding site" evidence="1">
    <location>
        <position position="313"/>
    </location>
    <ligand>
        <name>DNA</name>
        <dbReference type="ChEBI" id="CHEBI:16991"/>
    </ligand>
</feature>
<feature type="binding site" evidence="1">
    <location>
        <position position="318"/>
    </location>
    <ligand>
        <name>DNA</name>
        <dbReference type="ChEBI" id="CHEBI:16991"/>
    </ligand>
</feature>
<keyword id="KW-0067">ATP-binding</keyword>
<keyword id="KW-0963">Cytoplasm</keyword>
<keyword id="KW-0227">DNA damage</keyword>
<keyword id="KW-0233">DNA recombination</keyword>
<keyword id="KW-0234">DNA repair</keyword>
<keyword id="KW-0238">DNA-binding</keyword>
<keyword id="KW-0378">Hydrolase</keyword>
<keyword id="KW-0547">Nucleotide-binding</keyword>
<keyword id="KW-1185">Reference proteome</keyword>
<dbReference type="EC" id="3.6.4.-" evidence="1"/>
<dbReference type="EMBL" id="CP000462">
    <property type="protein sequence ID" value="ABK35822.1"/>
    <property type="molecule type" value="Genomic_DNA"/>
</dbReference>
<dbReference type="RefSeq" id="WP_011707371.1">
    <property type="nucleotide sequence ID" value="NC_008570.1"/>
</dbReference>
<dbReference type="RefSeq" id="YP_858103.1">
    <property type="nucleotide sequence ID" value="NC_008570.1"/>
</dbReference>
<dbReference type="SMR" id="A0KPA2"/>
<dbReference type="STRING" id="380703.AHA_3647"/>
<dbReference type="EnsemblBacteria" id="ABK35822">
    <property type="protein sequence ID" value="ABK35822"/>
    <property type="gene ID" value="AHA_3647"/>
</dbReference>
<dbReference type="GeneID" id="4490479"/>
<dbReference type="KEGG" id="aha:AHA_3647"/>
<dbReference type="PATRIC" id="fig|380703.7.peg.3623"/>
<dbReference type="eggNOG" id="COG2255">
    <property type="taxonomic scope" value="Bacteria"/>
</dbReference>
<dbReference type="HOGENOM" id="CLU_055599_1_0_6"/>
<dbReference type="OrthoDB" id="9804478at2"/>
<dbReference type="Proteomes" id="UP000000756">
    <property type="component" value="Chromosome"/>
</dbReference>
<dbReference type="GO" id="GO:0005737">
    <property type="term" value="C:cytoplasm"/>
    <property type="evidence" value="ECO:0007669"/>
    <property type="project" value="UniProtKB-SubCell"/>
</dbReference>
<dbReference type="GO" id="GO:0048476">
    <property type="term" value="C:Holliday junction resolvase complex"/>
    <property type="evidence" value="ECO:0007669"/>
    <property type="project" value="UniProtKB-UniRule"/>
</dbReference>
<dbReference type="GO" id="GO:0005524">
    <property type="term" value="F:ATP binding"/>
    <property type="evidence" value="ECO:0007669"/>
    <property type="project" value="UniProtKB-UniRule"/>
</dbReference>
<dbReference type="GO" id="GO:0016887">
    <property type="term" value="F:ATP hydrolysis activity"/>
    <property type="evidence" value="ECO:0007669"/>
    <property type="project" value="InterPro"/>
</dbReference>
<dbReference type="GO" id="GO:0000400">
    <property type="term" value="F:four-way junction DNA binding"/>
    <property type="evidence" value="ECO:0007669"/>
    <property type="project" value="UniProtKB-UniRule"/>
</dbReference>
<dbReference type="GO" id="GO:0009378">
    <property type="term" value="F:four-way junction helicase activity"/>
    <property type="evidence" value="ECO:0007669"/>
    <property type="project" value="InterPro"/>
</dbReference>
<dbReference type="GO" id="GO:0006310">
    <property type="term" value="P:DNA recombination"/>
    <property type="evidence" value="ECO:0007669"/>
    <property type="project" value="UniProtKB-UniRule"/>
</dbReference>
<dbReference type="GO" id="GO:0006281">
    <property type="term" value="P:DNA repair"/>
    <property type="evidence" value="ECO:0007669"/>
    <property type="project" value="UniProtKB-UniRule"/>
</dbReference>
<dbReference type="CDD" id="cd00009">
    <property type="entry name" value="AAA"/>
    <property type="match status" value="1"/>
</dbReference>
<dbReference type="FunFam" id="1.10.10.10:FF:000086">
    <property type="entry name" value="Holliday junction ATP-dependent DNA helicase RuvB"/>
    <property type="match status" value="1"/>
</dbReference>
<dbReference type="FunFam" id="1.10.8.60:FF:000023">
    <property type="entry name" value="Holliday junction ATP-dependent DNA helicase RuvB"/>
    <property type="match status" value="1"/>
</dbReference>
<dbReference type="FunFam" id="3.40.50.300:FF:000073">
    <property type="entry name" value="Holliday junction ATP-dependent DNA helicase RuvB"/>
    <property type="match status" value="1"/>
</dbReference>
<dbReference type="Gene3D" id="1.10.8.60">
    <property type="match status" value="1"/>
</dbReference>
<dbReference type="Gene3D" id="3.40.50.300">
    <property type="entry name" value="P-loop containing nucleotide triphosphate hydrolases"/>
    <property type="match status" value="1"/>
</dbReference>
<dbReference type="Gene3D" id="1.10.10.10">
    <property type="entry name" value="Winged helix-like DNA-binding domain superfamily/Winged helix DNA-binding domain"/>
    <property type="match status" value="1"/>
</dbReference>
<dbReference type="HAMAP" id="MF_00016">
    <property type="entry name" value="DNA_HJ_migration_RuvB"/>
    <property type="match status" value="1"/>
</dbReference>
<dbReference type="InterPro" id="IPR003593">
    <property type="entry name" value="AAA+_ATPase"/>
</dbReference>
<dbReference type="InterPro" id="IPR041445">
    <property type="entry name" value="AAA_lid_4"/>
</dbReference>
<dbReference type="InterPro" id="IPR004605">
    <property type="entry name" value="DNA_helicase_Holl-junc_RuvB"/>
</dbReference>
<dbReference type="InterPro" id="IPR027417">
    <property type="entry name" value="P-loop_NTPase"/>
</dbReference>
<dbReference type="InterPro" id="IPR008824">
    <property type="entry name" value="RuvB-like_N"/>
</dbReference>
<dbReference type="InterPro" id="IPR008823">
    <property type="entry name" value="RuvB_C"/>
</dbReference>
<dbReference type="InterPro" id="IPR036388">
    <property type="entry name" value="WH-like_DNA-bd_sf"/>
</dbReference>
<dbReference type="InterPro" id="IPR036390">
    <property type="entry name" value="WH_DNA-bd_sf"/>
</dbReference>
<dbReference type="NCBIfam" id="NF000868">
    <property type="entry name" value="PRK00080.1"/>
    <property type="match status" value="1"/>
</dbReference>
<dbReference type="NCBIfam" id="TIGR00635">
    <property type="entry name" value="ruvB"/>
    <property type="match status" value="1"/>
</dbReference>
<dbReference type="PANTHER" id="PTHR42848">
    <property type="match status" value="1"/>
</dbReference>
<dbReference type="PANTHER" id="PTHR42848:SF1">
    <property type="entry name" value="HOLLIDAY JUNCTION BRANCH MIGRATION COMPLEX SUBUNIT RUVB"/>
    <property type="match status" value="1"/>
</dbReference>
<dbReference type="Pfam" id="PF17864">
    <property type="entry name" value="AAA_lid_4"/>
    <property type="match status" value="1"/>
</dbReference>
<dbReference type="Pfam" id="PF05491">
    <property type="entry name" value="RuvB_C"/>
    <property type="match status" value="1"/>
</dbReference>
<dbReference type="Pfam" id="PF05496">
    <property type="entry name" value="RuvB_N"/>
    <property type="match status" value="1"/>
</dbReference>
<dbReference type="SMART" id="SM00382">
    <property type="entry name" value="AAA"/>
    <property type="match status" value="1"/>
</dbReference>
<dbReference type="SUPFAM" id="SSF52540">
    <property type="entry name" value="P-loop containing nucleoside triphosphate hydrolases"/>
    <property type="match status" value="1"/>
</dbReference>
<dbReference type="SUPFAM" id="SSF46785">
    <property type="entry name" value="Winged helix' DNA-binding domain"/>
    <property type="match status" value="1"/>
</dbReference>
<proteinExistence type="inferred from homology"/>
<evidence type="ECO:0000255" key="1">
    <source>
        <dbReference type="HAMAP-Rule" id="MF_00016"/>
    </source>
</evidence>
<protein>
    <recommendedName>
        <fullName evidence="1">Holliday junction branch migration complex subunit RuvB</fullName>
        <ecNumber evidence="1">3.6.4.-</ecNumber>
    </recommendedName>
</protein>
<organism>
    <name type="scientific">Aeromonas hydrophila subsp. hydrophila (strain ATCC 7966 / DSM 30187 / BCRC 13018 / CCUG 14551 / JCM 1027 / KCTC 2358 / NCIMB 9240 / NCTC 8049)</name>
    <dbReference type="NCBI Taxonomy" id="380703"/>
    <lineage>
        <taxon>Bacteria</taxon>
        <taxon>Pseudomonadati</taxon>
        <taxon>Pseudomonadota</taxon>
        <taxon>Gammaproteobacteria</taxon>
        <taxon>Aeromonadales</taxon>
        <taxon>Aeromonadaceae</taxon>
        <taxon>Aeromonas</taxon>
    </lineage>
</organism>
<comment type="function">
    <text evidence="1">The RuvA-RuvB-RuvC complex processes Holliday junction (HJ) DNA during genetic recombination and DNA repair, while the RuvA-RuvB complex plays an important role in the rescue of blocked DNA replication forks via replication fork reversal (RFR). RuvA specifically binds to HJ cruciform DNA, conferring on it an open structure. The RuvB hexamer acts as an ATP-dependent pump, pulling dsDNA into and through the RuvAB complex. RuvB forms 2 homohexamers on either side of HJ DNA bound by 1 or 2 RuvA tetramers; 4 subunits per hexamer contact DNA at a time. Coordinated motions by a converter formed by DNA-disengaged RuvB subunits stimulates ATP hydrolysis and nucleotide exchange. Immobilization of the converter enables RuvB to convert the ATP-contained energy into a lever motion, pulling 2 nucleotides of DNA out of the RuvA tetramer per ATP hydrolyzed, thus driving DNA branch migration. The RuvB motors rotate together with the DNA substrate, which together with the progressing nucleotide cycle form the mechanistic basis for DNA recombination by continuous HJ branch migration. Branch migration allows RuvC to scan DNA until it finds its consensus sequence, where it cleaves and resolves cruciform DNA.</text>
</comment>
<comment type="catalytic activity">
    <reaction evidence="1">
        <text>ATP + H2O = ADP + phosphate + H(+)</text>
        <dbReference type="Rhea" id="RHEA:13065"/>
        <dbReference type="ChEBI" id="CHEBI:15377"/>
        <dbReference type="ChEBI" id="CHEBI:15378"/>
        <dbReference type="ChEBI" id="CHEBI:30616"/>
        <dbReference type="ChEBI" id="CHEBI:43474"/>
        <dbReference type="ChEBI" id="CHEBI:456216"/>
    </reaction>
</comment>
<comment type="subunit">
    <text evidence="1">Homohexamer. Forms an RuvA(8)-RuvB(12)-Holliday junction (HJ) complex. HJ DNA is sandwiched between 2 RuvA tetramers; dsDNA enters through RuvA and exits via RuvB. An RuvB hexamer assembles on each DNA strand where it exits the tetramer. Each RuvB hexamer is contacted by two RuvA subunits (via domain III) on 2 adjacent RuvB subunits; this complex drives branch migration. In the full resolvosome a probable DNA-RuvA(4)-RuvB(12)-RuvC(2) complex forms which resolves the HJ.</text>
</comment>
<comment type="subcellular location">
    <subcellularLocation>
        <location evidence="1">Cytoplasm</location>
    </subcellularLocation>
</comment>
<comment type="domain">
    <text evidence="1">Has 3 domains, the large (RuvB-L) and small ATPase (RuvB-S) domains and the C-terminal head (RuvB-H) domain. The head domain binds DNA, while the ATPase domains jointly bind ATP, ADP or are empty depending on the state of the subunit in the translocation cycle. During a single DNA translocation step the structure of each domain remains the same, but their relative positions change.</text>
</comment>
<comment type="similarity">
    <text evidence="1">Belongs to the RuvB family.</text>
</comment>
<sequence>MIEADRLISASGGREEEVIDRAIRPKLLADYTGQDPVCEQMEIFIAAARQRGEALDHLLIFGPPGLGKTTLANIVANEMGVNIKTTSGPVLEKAGDLAALLTNLEPNDVLFIDEIHRLSPVVEEVLYPAMEDYQLDIMIGEGPAARSIKLDLPPFTLIGATTRAGSLTSPLRDRFGIVQRLEFYNVKDLTDIVARSARCLGLDMTEDGALEVARRSRGTPRIANRLLRRVRDFAQVKSDGRIDGPIAARAMDMLDVDNEGFDFMDRKLLLAVIDKFLGGPVGLDNLAAAIGEEKDTIEDVLEPYLIQQGYLQRTPRGRIATPRAYAHFGLQRPDEG</sequence>
<accession>A0KPA2</accession>
<name>RUVB_AERHH</name>